<sequence length="156" mass="17600">MNLNATLIGQLIAFAIFVWFCMKYVWPPIIKAIEERQRSIANALASAEAAKKEQSDTKVLVEQEINQARIKAQEIVDLANKRRNEILEEVKIEAEALREKIIEQGHAEIESERKRVQEELRIKVASLAIAGAEKIVGRNIDEAANNDIIDKLVADL</sequence>
<protein>
    <recommendedName>
        <fullName evidence="1">ATP synthase subunit b</fullName>
    </recommendedName>
    <alternativeName>
        <fullName evidence="1">ATP synthase F(0) sector subunit b</fullName>
    </alternativeName>
    <alternativeName>
        <fullName evidence="1">ATPase subunit I</fullName>
    </alternativeName>
    <alternativeName>
        <fullName evidence="1">F-type ATPase subunit b</fullName>
        <shortName evidence="1">F-ATPase subunit b</shortName>
    </alternativeName>
</protein>
<organism>
    <name type="scientific">Histophilus somni (strain 129Pt)</name>
    <name type="common">Haemophilus somnus</name>
    <dbReference type="NCBI Taxonomy" id="205914"/>
    <lineage>
        <taxon>Bacteria</taxon>
        <taxon>Pseudomonadati</taxon>
        <taxon>Pseudomonadota</taxon>
        <taxon>Gammaproteobacteria</taxon>
        <taxon>Pasteurellales</taxon>
        <taxon>Pasteurellaceae</taxon>
        <taxon>Histophilus</taxon>
    </lineage>
</organism>
<name>ATPF_HISS1</name>
<keyword id="KW-0066">ATP synthesis</keyword>
<keyword id="KW-0997">Cell inner membrane</keyword>
<keyword id="KW-1003">Cell membrane</keyword>
<keyword id="KW-0138">CF(0)</keyword>
<keyword id="KW-0375">Hydrogen ion transport</keyword>
<keyword id="KW-0406">Ion transport</keyword>
<keyword id="KW-0472">Membrane</keyword>
<keyword id="KW-0812">Transmembrane</keyword>
<keyword id="KW-1133">Transmembrane helix</keyword>
<keyword id="KW-0813">Transport</keyword>
<feature type="chain" id="PRO_0000368515" description="ATP synthase subunit b">
    <location>
        <begin position="1"/>
        <end position="156"/>
    </location>
</feature>
<feature type="transmembrane region" description="Helical" evidence="1">
    <location>
        <begin position="7"/>
        <end position="27"/>
    </location>
</feature>
<accession>Q0I5W9</accession>
<evidence type="ECO:0000255" key="1">
    <source>
        <dbReference type="HAMAP-Rule" id="MF_01398"/>
    </source>
</evidence>
<comment type="function">
    <text evidence="1">F(1)F(0) ATP synthase produces ATP from ADP in the presence of a proton or sodium gradient. F-type ATPases consist of two structural domains, F(1) containing the extramembraneous catalytic core and F(0) containing the membrane proton channel, linked together by a central stalk and a peripheral stalk. During catalysis, ATP synthesis in the catalytic domain of F(1) is coupled via a rotary mechanism of the central stalk subunits to proton translocation.</text>
</comment>
<comment type="function">
    <text evidence="1">Component of the F(0) channel, it forms part of the peripheral stalk, linking F(1) to F(0).</text>
</comment>
<comment type="subunit">
    <text evidence="1">F-type ATPases have 2 components, F(1) - the catalytic core - and F(0) - the membrane proton channel. F(1) has five subunits: alpha(3), beta(3), gamma(1), delta(1), epsilon(1). F(0) has three main subunits: a(1), b(2) and c(10-14). The alpha and beta chains form an alternating ring which encloses part of the gamma chain. F(1) is attached to F(0) by a central stalk formed by the gamma and epsilon chains, while a peripheral stalk is formed by the delta and b chains.</text>
</comment>
<comment type="subcellular location">
    <subcellularLocation>
        <location evidence="1">Cell inner membrane</location>
        <topology evidence="1">Single-pass membrane protein</topology>
    </subcellularLocation>
</comment>
<comment type="similarity">
    <text evidence="1">Belongs to the ATPase B chain family.</text>
</comment>
<proteinExistence type="inferred from homology"/>
<gene>
    <name evidence="1" type="primary">atpF</name>
    <name type="ordered locus">HS_1700</name>
</gene>
<reference key="1">
    <citation type="journal article" date="2007" name="J. Bacteriol.">
        <title>Complete genome sequence of Haemophilus somnus (Histophilus somni) strain 129Pt and comparison to Haemophilus ducreyi 35000HP and Haemophilus influenzae Rd.</title>
        <authorList>
            <person name="Challacombe J.F."/>
            <person name="Duncan A.J."/>
            <person name="Brettin T.S."/>
            <person name="Bruce D."/>
            <person name="Chertkov O."/>
            <person name="Detter J.C."/>
            <person name="Han C.S."/>
            <person name="Misra M."/>
            <person name="Richardson P."/>
            <person name="Tapia R."/>
            <person name="Thayer N."/>
            <person name="Xie G."/>
            <person name="Inzana T.J."/>
        </authorList>
    </citation>
    <scope>NUCLEOTIDE SEQUENCE [LARGE SCALE GENOMIC DNA]</scope>
    <source>
        <strain>129Pt</strain>
    </source>
</reference>
<dbReference type="EMBL" id="CP000436">
    <property type="protein sequence ID" value="ABI25968.1"/>
    <property type="molecule type" value="Genomic_DNA"/>
</dbReference>
<dbReference type="SMR" id="Q0I5W9"/>
<dbReference type="KEGG" id="hso:HS_1700"/>
<dbReference type="eggNOG" id="COG0711">
    <property type="taxonomic scope" value="Bacteria"/>
</dbReference>
<dbReference type="HOGENOM" id="CLU_079215_4_5_6"/>
<dbReference type="GO" id="GO:0005886">
    <property type="term" value="C:plasma membrane"/>
    <property type="evidence" value="ECO:0007669"/>
    <property type="project" value="UniProtKB-SubCell"/>
</dbReference>
<dbReference type="GO" id="GO:0045259">
    <property type="term" value="C:proton-transporting ATP synthase complex"/>
    <property type="evidence" value="ECO:0007669"/>
    <property type="project" value="UniProtKB-KW"/>
</dbReference>
<dbReference type="GO" id="GO:0046933">
    <property type="term" value="F:proton-transporting ATP synthase activity, rotational mechanism"/>
    <property type="evidence" value="ECO:0007669"/>
    <property type="project" value="UniProtKB-UniRule"/>
</dbReference>
<dbReference type="GO" id="GO:0046961">
    <property type="term" value="F:proton-transporting ATPase activity, rotational mechanism"/>
    <property type="evidence" value="ECO:0007669"/>
    <property type="project" value="TreeGrafter"/>
</dbReference>
<dbReference type="CDD" id="cd06503">
    <property type="entry name" value="ATP-synt_Fo_b"/>
    <property type="match status" value="1"/>
</dbReference>
<dbReference type="FunFam" id="1.20.5.620:FF:000001">
    <property type="entry name" value="ATP synthase subunit b"/>
    <property type="match status" value="1"/>
</dbReference>
<dbReference type="Gene3D" id="1.20.5.620">
    <property type="entry name" value="F1F0 ATP synthase subunit B, membrane domain"/>
    <property type="match status" value="1"/>
</dbReference>
<dbReference type="HAMAP" id="MF_01398">
    <property type="entry name" value="ATP_synth_b_bprime"/>
    <property type="match status" value="1"/>
</dbReference>
<dbReference type="InterPro" id="IPR028987">
    <property type="entry name" value="ATP_synth_B-like_membr_sf"/>
</dbReference>
<dbReference type="InterPro" id="IPR002146">
    <property type="entry name" value="ATP_synth_b/b'su_bac/chlpt"/>
</dbReference>
<dbReference type="InterPro" id="IPR005864">
    <property type="entry name" value="ATP_synth_F0_bsu_bac"/>
</dbReference>
<dbReference type="InterPro" id="IPR050059">
    <property type="entry name" value="ATP_synthase_B_chain"/>
</dbReference>
<dbReference type="NCBIfam" id="TIGR01144">
    <property type="entry name" value="ATP_synt_b"/>
    <property type="match status" value="1"/>
</dbReference>
<dbReference type="NCBIfam" id="NF004411">
    <property type="entry name" value="PRK05759.1-2"/>
    <property type="match status" value="1"/>
</dbReference>
<dbReference type="NCBIfam" id="NF004413">
    <property type="entry name" value="PRK05759.1-4"/>
    <property type="match status" value="1"/>
</dbReference>
<dbReference type="PANTHER" id="PTHR33445:SF1">
    <property type="entry name" value="ATP SYNTHASE SUBUNIT B"/>
    <property type="match status" value="1"/>
</dbReference>
<dbReference type="PANTHER" id="PTHR33445">
    <property type="entry name" value="ATP SYNTHASE SUBUNIT B', CHLOROPLASTIC"/>
    <property type="match status" value="1"/>
</dbReference>
<dbReference type="Pfam" id="PF00430">
    <property type="entry name" value="ATP-synt_B"/>
    <property type="match status" value="1"/>
</dbReference>
<dbReference type="SUPFAM" id="SSF81573">
    <property type="entry name" value="F1F0 ATP synthase subunit B, membrane domain"/>
    <property type="match status" value="1"/>
</dbReference>